<feature type="chain" id="PRO_1000046651" description="UPF0301 protein Cpha266_0885">
    <location>
        <begin position="1"/>
        <end position="187"/>
    </location>
</feature>
<name>Y885_CHLPD</name>
<organism>
    <name type="scientific">Chlorobium phaeobacteroides (strain DSM 266 / SMG 266 / 2430)</name>
    <dbReference type="NCBI Taxonomy" id="290317"/>
    <lineage>
        <taxon>Bacteria</taxon>
        <taxon>Pseudomonadati</taxon>
        <taxon>Chlorobiota</taxon>
        <taxon>Chlorobiia</taxon>
        <taxon>Chlorobiales</taxon>
        <taxon>Chlorobiaceae</taxon>
        <taxon>Chlorobium/Pelodictyon group</taxon>
        <taxon>Chlorobium</taxon>
    </lineage>
</organism>
<gene>
    <name type="ordered locus">Cpha266_0885</name>
</gene>
<keyword id="KW-1185">Reference proteome</keyword>
<dbReference type="EMBL" id="CP000492">
    <property type="protein sequence ID" value="ABL64933.1"/>
    <property type="molecule type" value="Genomic_DNA"/>
</dbReference>
<dbReference type="RefSeq" id="WP_011744760.1">
    <property type="nucleotide sequence ID" value="NC_008639.1"/>
</dbReference>
<dbReference type="SMR" id="A1BEV6"/>
<dbReference type="STRING" id="290317.Cpha266_0885"/>
<dbReference type="KEGG" id="cph:Cpha266_0885"/>
<dbReference type="eggNOG" id="COG1678">
    <property type="taxonomic scope" value="Bacteria"/>
</dbReference>
<dbReference type="HOGENOM" id="CLU_057596_2_1_10"/>
<dbReference type="OrthoDB" id="9807486at2"/>
<dbReference type="Proteomes" id="UP000008701">
    <property type="component" value="Chromosome"/>
</dbReference>
<dbReference type="GO" id="GO:0005829">
    <property type="term" value="C:cytosol"/>
    <property type="evidence" value="ECO:0007669"/>
    <property type="project" value="TreeGrafter"/>
</dbReference>
<dbReference type="Gene3D" id="3.40.1740.10">
    <property type="entry name" value="VC0467-like"/>
    <property type="match status" value="1"/>
</dbReference>
<dbReference type="HAMAP" id="MF_00758">
    <property type="entry name" value="UPF0301"/>
    <property type="match status" value="1"/>
</dbReference>
<dbReference type="InterPro" id="IPR003774">
    <property type="entry name" value="AlgH-like"/>
</dbReference>
<dbReference type="PANTHER" id="PTHR30327">
    <property type="entry name" value="UNCHARACTERIZED PROTEIN YQGE"/>
    <property type="match status" value="1"/>
</dbReference>
<dbReference type="PANTHER" id="PTHR30327:SF1">
    <property type="entry name" value="UPF0301 PROTEIN YQGE"/>
    <property type="match status" value="1"/>
</dbReference>
<dbReference type="Pfam" id="PF02622">
    <property type="entry name" value="DUF179"/>
    <property type="match status" value="1"/>
</dbReference>
<dbReference type="SUPFAM" id="SSF143456">
    <property type="entry name" value="VC0467-like"/>
    <property type="match status" value="1"/>
</dbReference>
<evidence type="ECO:0000255" key="1">
    <source>
        <dbReference type="HAMAP-Rule" id="MF_00758"/>
    </source>
</evidence>
<sequence length="187" mass="20884">MVNEFEKLQSGKLLLASANLLESNFKRTVLIICEHNESGSLGFILNRPMEFKVCEAVAGFEEIEEPLHMGGPVQVDTVHFLHSRGDIIDGATEIFPGLFWGGDKNQVSFLLNTGVMQPSEIRFFLGYSGWSAGQLEEEFEIGSWYIAEASRDVIFSDAYERMWSRSVRSKGGEYQIVANAPELPGLN</sequence>
<protein>
    <recommendedName>
        <fullName evidence="1">UPF0301 protein Cpha266_0885</fullName>
    </recommendedName>
</protein>
<accession>A1BEV6</accession>
<proteinExistence type="inferred from homology"/>
<comment type="similarity">
    <text evidence="1">Belongs to the UPF0301 (AlgH) family.</text>
</comment>
<reference key="1">
    <citation type="submission" date="2006-12" db="EMBL/GenBank/DDBJ databases">
        <title>Complete sequence of Chlorobium phaeobacteroides DSM 266.</title>
        <authorList>
            <consortium name="US DOE Joint Genome Institute"/>
            <person name="Copeland A."/>
            <person name="Lucas S."/>
            <person name="Lapidus A."/>
            <person name="Barry K."/>
            <person name="Detter J.C."/>
            <person name="Glavina del Rio T."/>
            <person name="Hammon N."/>
            <person name="Israni S."/>
            <person name="Pitluck S."/>
            <person name="Goltsman E."/>
            <person name="Schmutz J."/>
            <person name="Larimer F."/>
            <person name="Land M."/>
            <person name="Hauser L."/>
            <person name="Mikhailova N."/>
            <person name="Li T."/>
            <person name="Overmann J."/>
            <person name="Bryant D.A."/>
            <person name="Richardson P."/>
        </authorList>
    </citation>
    <scope>NUCLEOTIDE SEQUENCE [LARGE SCALE GENOMIC DNA]</scope>
    <source>
        <strain>DSM 266 / SMG 266 / 2430</strain>
    </source>
</reference>